<organismHost>
    <name type="scientific">Sus scrofa</name>
    <name type="common">Pig</name>
    <dbReference type="NCBI Taxonomy" id="9823"/>
</organismHost>
<organism>
    <name type="scientific">Porcine circovirus 2</name>
    <name type="common">PCV2</name>
    <dbReference type="NCBI Taxonomy" id="85708"/>
    <lineage>
        <taxon>Viruses</taxon>
        <taxon>Monodnaviria</taxon>
        <taxon>Shotokuvirae</taxon>
        <taxon>Cressdnaviricota</taxon>
        <taxon>Arfiviricetes</taxon>
        <taxon>Cirlivirales</taxon>
        <taxon>Circoviridae</taxon>
        <taxon>Circovirus</taxon>
        <taxon>Circovirus porcine2</taxon>
    </lineage>
</organism>
<evidence type="ECO:0000269" key="1">
    <source>
    </source>
</evidence>
<evidence type="ECO:0000269" key="2">
    <source>
    </source>
</evidence>
<evidence type="ECO:0000269" key="3">
    <source>
    </source>
</evidence>
<evidence type="ECO:0000269" key="4">
    <source>
    </source>
</evidence>
<evidence type="ECO:0000269" key="5">
    <source>
    </source>
</evidence>
<gene>
    <name type="primary">ORF4</name>
    <name type="synonym">ORF4 protein</name>
</gene>
<keyword id="KW-1035">Host cytoplasm</keyword>
<keyword id="KW-0945">Host-virus interaction</keyword>
<keyword id="KW-1119">Modulation of host cell apoptosis by virus</keyword>
<feature type="chain" id="PRO_0000445707" description="Anti-apoptotic ORF4 protein">
    <location>
        <begin position="1"/>
        <end position="59"/>
    </location>
</feature>
<reference key="1">
    <citation type="journal article" date="1998" name="J. Gen. Virol.">
        <title>Characterization of novel circovirus DNAs associated with wasting syndromes in pigs.</title>
        <authorList>
            <person name="Meehan B.M."/>
            <person name="McNeilly F."/>
            <person name="Todd D."/>
            <person name="Kennedy S."/>
            <person name="Jewhurst V.A."/>
            <person name="Ellis J.A."/>
            <person name="Hassard L.E."/>
            <person name="Clark E.G."/>
            <person name="Haines D.M."/>
            <person name="Allan G.M."/>
        </authorList>
    </citation>
    <scope>NUCLEOTIDE SEQUENCE [LARGE SCALE GENOMIC DNA]</scope>
    <source>
        <strain>Porcine circovirus Type II</strain>
    </source>
</reference>
<reference key="2">
    <citation type="journal article" date="1998" name="J. Virol.">
        <title>Nucleotide sequence of porcine circovirus associated with postweaning multisystemic wasting syndrome in pigs.</title>
        <authorList>
            <person name="Hamel A.L."/>
            <person name="Lin L.L."/>
            <person name="Nayar G.P."/>
        </authorList>
    </citation>
    <scope>NUCLEOTIDE SEQUENCE [LARGE SCALE GENOMIC DNA]</scope>
    <source>
        <strain>Pmws PCV</strain>
    </source>
</reference>
<reference key="3">
    <citation type="journal article" date="2013" name="Virus Genes">
        <title>Identification and characterization of two novel transcription units of porcine circovirus 2.</title>
        <authorList>
            <person name="Gao Z."/>
            <person name="Dong Q."/>
            <person name="Jiang Y."/>
            <person name="Opriessnig T."/>
            <person name="Wang J."/>
            <person name="Quan Y."/>
            <person name="Yang Z."/>
        </authorList>
    </citation>
    <scope>NUCLEOTIDE SEQUENCE [GENOMIC DNA]</scope>
    <source>
        <strain>FD</strain>
    </source>
</reference>
<reference key="4">
    <citation type="journal article" date="2018" name="Virus Res.">
        <title>In vitro and in silico studies reveal capsid-mutant Porcine circovirus 2b with novel cytopathogenic and structural characteristics.</title>
        <authorList>
            <person name="Cruz T.F."/>
            <person name="Magro A.J."/>
            <person name="de Castro A.M."/>
            <person name="Pedraza-Ordonez F.J."/>
            <person name="Tsunemi M.H."/>
            <person name="Perahia D."/>
            <person name="Araujo J.P. Jr."/>
        </authorList>
    </citation>
    <scope>NUCLEOTIDE SEQUENCE [GENOMIC DNA]</scope>
    <source>
        <strain>PCV2b</strain>
    </source>
</reference>
<reference key="5">
    <citation type="journal article" date="2014" name="Virus Genes">
        <title>Current understanding of genomic DNA of porcine circovirus type 2.</title>
        <authorList>
            <person name="Lv Q.Z."/>
            <person name="Guo K.K."/>
            <person name="Zhang Y.M."/>
        </authorList>
    </citation>
    <scope>REVIEW</scope>
</reference>
<reference key="6">
    <citation type="journal article" date="2014" name="Virus Res.">
        <title>ORF4-protein deficient PCV2 mutants enhance virus-induced apoptosis and show differential expression of mRNAs in vitro.</title>
        <authorList>
            <person name="Gao Z."/>
            <person name="Dong Q."/>
            <person name="Jiang Y."/>
            <person name="Opriessnig T."/>
            <person name="Wang J."/>
            <person name="Quan Y."/>
            <person name="Yang Z."/>
        </authorList>
    </citation>
    <scope>FUNCTION</scope>
</reference>
<reference key="7">
    <citation type="journal article" date="2015" name="J. Biosci.">
        <title>Porcine circovirus type 2 ORF4 protein binds heavy chain ferritin.</title>
        <authorList>
            <person name="Lv Q."/>
            <person name="Guo K."/>
            <person name="Wang T."/>
            <person name="Zhang C."/>
            <person name="Zhang Y."/>
        </authorList>
    </citation>
    <scope>INTERACTION WITH FTH1</scope>
</reference>
<reference key="8">
    <citation type="journal article" date="2016" name="J. Gen. Virol.">
        <title>The ORF4 protein of porcine circovirus type 2 antagonizes apoptosis by stabilizing the concentration of ferritin heavy chain through physical interaction.</title>
        <authorList>
            <person name="Lv Q."/>
            <person name="Guo K."/>
            <person name="Zhang G."/>
            <person name="Zhang Y."/>
        </authorList>
    </citation>
    <scope>FUNCTION</scope>
    <scope>INTERACTION WITH HOST FTH1</scope>
    <scope>SUBCELLULAR LOCATION</scope>
</reference>
<reference key="9">
    <citation type="journal article" date="2018" name="J. Virol.">
        <title>Caspase-Dependent Apoptosis Induction via Viral Protein ORF4 of Porcine Circovirus 2 Binding to Mitochondrial Adenine Nucleotide Translocase 3.</title>
        <authorList>
            <person name="Lin C."/>
            <person name="Gu J."/>
            <person name="Wang H."/>
            <person name="Zhou J."/>
            <person name="Li J."/>
            <person name="Wang S."/>
            <person name="Jin Y."/>
            <person name="Liu C."/>
            <person name="Liu J."/>
            <person name="Yang H."/>
            <person name="Jiang P."/>
            <person name="Zhou J."/>
        </authorList>
    </citation>
    <scope>INTERACTION WITH HOST ANT3</scope>
</reference>
<dbReference type="EMBL" id="AF055391">
    <property type="protein sequence ID" value="AAC35301.1"/>
    <property type="molecule type" value="Genomic_DNA"/>
</dbReference>
<dbReference type="EMBL" id="AF055392">
    <property type="protein sequence ID" value="AAC35312.1"/>
    <property type="molecule type" value="Genomic_DNA"/>
</dbReference>
<dbReference type="EMBL" id="AF055393">
    <property type="protein sequence ID" value="AAC35323.1"/>
    <property type="molecule type" value="Genomic_DNA"/>
</dbReference>
<dbReference type="EMBL" id="AF055394">
    <property type="protein sequence ID" value="AAC35333.1"/>
    <property type="molecule type" value="Genomic_DNA"/>
</dbReference>
<dbReference type="EMBL" id="AF027217">
    <property type="protein sequence ID" value="AAC59465.1"/>
    <property type="molecule type" value="Genomic_DNA"/>
</dbReference>
<dbReference type="EMBL" id="AF201897">
    <property type="protein sequence ID" value="AAG41229.1"/>
    <property type="molecule type" value="Genomic_DNA"/>
</dbReference>
<dbReference type="EMBL" id="KC741192">
    <property type="protein sequence ID" value="AGO32666.1"/>
    <property type="molecule type" value="Genomic_DNA"/>
</dbReference>
<dbReference type="EMBL" id="KT336602">
    <property type="protein sequence ID" value="ANZ52566.1"/>
    <property type="molecule type" value="Genomic_DNA"/>
</dbReference>
<dbReference type="EMBL" id="KT336603">
    <property type="protein sequence ID" value="ANZ52570.1"/>
    <property type="molecule type" value="Genomic_DNA"/>
</dbReference>
<dbReference type="EMBL" id="MF150182">
    <property type="protein sequence ID" value="AWO14537.1"/>
    <property type="molecule type" value="Genomic_DNA"/>
</dbReference>
<dbReference type="EMBL" id="MF150183">
    <property type="protein sequence ID" value="AWO14541.1"/>
    <property type="molecule type" value="Genomic_DNA"/>
</dbReference>
<dbReference type="EMBL" id="MF150184">
    <property type="protein sequence ID" value="AWO14545.1"/>
    <property type="molecule type" value="Genomic_DNA"/>
</dbReference>
<dbReference type="EMBL" id="MF150185">
    <property type="protein sequence ID" value="AWO14549.1"/>
    <property type="molecule type" value="Genomic_DNA"/>
</dbReference>
<dbReference type="EMBL" id="MF150186">
    <property type="protein sequence ID" value="AWO14553.1"/>
    <property type="molecule type" value="Genomic_DNA"/>
</dbReference>
<dbReference type="EMBL" id="MF150187">
    <property type="protein sequence ID" value="AWO14557.1"/>
    <property type="molecule type" value="Genomic_DNA"/>
</dbReference>
<dbReference type="EMBL" id="MF150188">
    <property type="protein sequence ID" value="AWO14561.1"/>
    <property type="molecule type" value="Genomic_DNA"/>
</dbReference>
<dbReference type="EMBL" id="MF150189">
    <property type="protein sequence ID" value="AWO14565.1"/>
    <property type="molecule type" value="Genomic_DNA"/>
</dbReference>
<dbReference type="EMBL" id="MF150190">
    <property type="protein sequence ID" value="AWO14569.1"/>
    <property type="molecule type" value="Genomic_DNA"/>
</dbReference>
<dbReference type="EMBL" id="MF150191">
    <property type="protein sequence ID" value="AWO14573.1"/>
    <property type="molecule type" value="Genomic_DNA"/>
</dbReference>
<dbReference type="EMBL" id="AB072301">
    <property type="protein sequence ID" value="BAB69434.1"/>
    <property type="molecule type" value="Genomic_DNA"/>
</dbReference>
<dbReference type="EMBL" id="AB072303">
    <property type="protein sequence ID" value="BAB69443.1"/>
    <property type="molecule type" value="Genomic_DNA"/>
</dbReference>
<dbReference type="Proteomes" id="UP000115010">
    <property type="component" value="Genome"/>
</dbReference>
<dbReference type="Proteomes" id="UP000124612">
    <property type="component" value="Genome"/>
</dbReference>
<dbReference type="Proteomes" id="UP000130671">
    <property type="component" value="Genome"/>
</dbReference>
<dbReference type="Proteomes" id="UP000150239">
    <property type="component" value="Genome"/>
</dbReference>
<dbReference type="Proteomes" id="UP000161967">
    <property type="component" value="Genome"/>
</dbReference>
<dbReference type="Proteomes" id="UP000164093">
    <property type="component" value="Genome"/>
</dbReference>
<dbReference type="Proteomes" id="UP000174112">
    <property type="component" value="Genome"/>
</dbReference>
<dbReference type="Proteomes" id="UP000179422">
    <property type="component" value="Genome"/>
</dbReference>
<dbReference type="Proteomes" id="UP000180329">
    <property type="component" value="Genome"/>
</dbReference>
<dbReference type="Proteomes" id="UP000180332">
    <property type="component" value="Genome"/>
</dbReference>
<dbReference type="Proteomes" id="UP000286849">
    <property type="component" value="Genome"/>
</dbReference>
<dbReference type="Proteomes" id="UP000287313">
    <property type="component" value="Genome"/>
</dbReference>
<dbReference type="Proteomes" id="UP000287586">
    <property type="component" value="Genome"/>
</dbReference>
<dbReference type="Proteomes" id="UP000287698">
    <property type="component" value="Genome"/>
</dbReference>
<dbReference type="Proteomes" id="UP000288176">
    <property type="component" value="Genome"/>
</dbReference>
<dbReference type="Proteomes" id="UP000288263">
    <property type="component" value="Genome"/>
</dbReference>
<dbReference type="Proteomes" id="UP000288319">
    <property type="component" value="Genome"/>
</dbReference>
<dbReference type="Proteomes" id="UP000288320">
    <property type="component" value="Genome"/>
</dbReference>
<dbReference type="Proteomes" id="UP000288556">
    <property type="component" value="Genome"/>
</dbReference>
<dbReference type="Proteomes" id="UP000288616">
    <property type="component" value="Genome"/>
</dbReference>
<dbReference type="GO" id="GO:0030430">
    <property type="term" value="C:host cell cytoplasm"/>
    <property type="evidence" value="ECO:0007669"/>
    <property type="project" value="UniProtKB-SubCell"/>
</dbReference>
<dbReference type="GO" id="GO:0052151">
    <property type="term" value="P:symbiont-mediated activation of host apoptosis"/>
    <property type="evidence" value="ECO:0000269"/>
    <property type="project" value="SigSci"/>
</dbReference>
<dbReference type="InterPro" id="IPR009757">
    <property type="entry name" value="Circovirus2_Orf4"/>
</dbReference>
<dbReference type="Pfam" id="PF07038">
    <property type="entry name" value="Circovir2_Orf4"/>
    <property type="match status" value="1"/>
</dbReference>
<name>ORF4_PCV2</name>
<sequence length="59" mass="6516">MTCTLVFQSRFCIFPLTFKSSASPRKFLTNVTGCCSATVTRLPLSNKVLTAVDRSLRCP</sequence>
<protein>
    <recommendedName>
        <fullName>Anti-apoptotic ORF4 protein</fullName>
    </recommendedName>
</protein>
<comment type="function">
    <text evidence="2 3 4">Antagonizes host cell apoptosis by interacting with host ferritin heavy chain. The ORF4 protein physically binds host FHC, resulting in the reduction of FHC protein levels in host cells. Reduction of FHC concentration further inhibits the accumulation of reactive oxygen in host cells, leading to reduced apoptosis.</text>
</comment>
<comment type="subunit">
    <text evidence="3 4 5">Interacts with host FTH1 (PubMed:26333394, PubMed:27030984). May interact with host ANT3 (PubMed:29491154).</text>
</comment>
<comment type="subcellular location">
    <subcellularLocation>
        <location evidence="1">Host cytoplasm</location>
    </subcellularLocation>
</comment>
<comment type="caution">
    <text evidence="5">Other experiments suggest that it may enhance apoptosis instead of antagonizing it.</text>
</comment>
<accession>O56125</accession>
<accession>Q782A8</accession>
<accession>Q9YJN0</accession>
<proteinExistence type="evidence at protein level"/>